<evidence type="ECO:0000250" key="1">
    <source>
        <dbReference type="UniProtKB" id="P21396"/>
    </source>
</evidence>
<evidence type="ECO:0000250" key="2">
    <source>
        <dbReference type="UniProtKB" id="P21397"/>
    </source>
</evidence>
<evidence type="ECO:0000305" key="3"/>
<protein>
    <recommendedName>
        <fullName evidence="2">Amine oxidase [flavin-containing] A</fullName>
        <ecNumber evidence="1">1.4.3.21</ecNumber>
        <ecNumber evidence="1">1.4.3.4</ecNumber>
    </recommendedName>
    <alternativeName>
        <fullName>Monoamine oxidase type A</fullName>
        <shortName>MAO-A</shortName>
    </alternativeName>
</protein>
<comment type="function">
    <text evidence="1">Catalyzes the oxidative deamination of primary and some secondary amine such as neurotransmitters, with concomitant reduction of oxygen to hydrogen peroxide and has important functions in the metabolism of neuroactive and vasoactive amines in the central nervous system and peripheral tissues. Preferentially oxidizes serotonin. Also catalyzes the oxidative deamination of kynuramine to 3-(2-aminophenyl)-3-oxopropanal that can spontaneously condense to 4-hydroxyquinoline.</text>
</comment>
<comment type="catalytic activity">
    <reaction evidence="1">
        <text>a secondary aliphatic amine + O2 + H2O = a primary amine + an aldehyde + H2O2</text>
        <dbReference type="Rhea" id="RHEA:26414"/>
        <dbReference type="ChEBI" id="CHEBI:15377"/>
        <dbReference type="ChEBI" id="CHEBI:15379"/>
        <dbReference type="ChEBI" id="CHEBI:16240"/>
        <dbReference type="ChEBI" id="CHEBI:17478"/>
        <dbReference type="ChEBI" id="CHEBI:58855"/>
        <dbReference type="ChEBI" id="CHEBI:65296"/>
        <dbReference type="EC" id="1.4.3.4"/>
    </reaction>
</comment>
<comment type="catalytic activity">
    <reaction evidence="1">
        <text>a primary methyl amine + O2 + H2O = an aldehyde + H2O2 + NH4(+)</text>
        <dbReference type="Rhea" id="RHEA:16153"/>
        <dbReference type="ChEBI" id="CHEBI:15377"/>
        <dbReference type="ChEBI" id="CHEBI:15379"/>
        <dbReference type="ChEBI" id="CHEBI:16240"/>
        <dbReference type="ChEBI" id="CHEBI:17478"/>
        <dbReference type="ChEBI" id="CHEBI:28938"/>
        <dbReference type="ChEBI" id="CHEBI:228804"/>
        <dbReference type="EC" id="1.4.3.21"/>
    </reaction>
</comment>
<comment type="catalytic activity">
    <reaction evidence="1">
        <text>(R)-adrenaline + O2 + H2O = (R)-3,4-dihydroxymandelaldehyde + methylamine + H2O2</text>
        <dbReference type="Rhea" id="RHEA:51168"/>
        <dbReference type="ChEBI" id="CHEBI:15377"/>
        <dbReference type="ChEBI" id="CHEBI:15379"/>
        <dbReference type="ChEBI" id="CHEBI:16240"/>
        <dbReference type="ChEBI" id="CHEBI:59338"/>
        <dbReference type="ChEBI" id="CHEBI:71406"/>
        <dbReference type="ChEBI" id="CHEBI:180943"/>
    </reaction>
</comment>
<comment type="catalytic activity">
    <reaction evidence="1">
        <text>dopamine + O2 + H2O = 3,4-dihydroxyphenylacetaldehyde + H2O2 + NH4(+)</text>
        <dbReference type="Rhea" id="RHEA:27946"/>
        <dbReference type="ChEBI" id="CHEBI:15377"/>
        <dbReference type="ChEBI" id="CHEBI:15379"/>
        <dbReference type="ChEBI" id="CHEBI:16240"/>
        <dbReference type="ChEBI" id="CHEBI:27978"/>
        <dbReference type="ChEBI" id="CHEBI:28938"/>
        <dbReference type="ChEBI" id="CHEBI:59905"/>
    </reaction>
</comment>
<comment type="catalytic activity">
    <reaction evidence="1">
        <text>tyramine + O2 + H2O = (4-hydroxyphenyl)acetaldehyde + H2O2 + NH4(+)</text>
        <dbReference type="Rhea" id="RHEA:30591"/>
        <dbReference type="ChEBI" id="CHEBI:15377"/>
        <dbReference type="ChEBI" id="CHEBI:15379"/>
        <dbReference type="ChEBI" id="CHEBI:15621"/>
        <dbReference type="ChEBI" id="CHEBI:16240"/>
        <dbReference type="ChEBI" id="CHEBI:28938"/>
        <dbReference type="ChEBI" id="CHEBI:327995"/>
    </reaction>
</comment>
<comment type="catalytic activity">
    <reaction evidence="1">
        <text>(R)-noradrenaline + O2 + H2O = (R)-3,4-dihydroxymandelaldehyde + H2O2 + NH4(+)</text>
        <dbReference type="Rhea" id="RHEA:69076"/>
        <dbReference type="ChEBI" id="CHEBI:15377"/>
        <dbReference type="ChEBI" id="CHEBI:15379"/>
        <dbReference type="ChEBI" id="CHEBI:16240"/>
        <dbReference type="ChEBI" id="CHEBI:28938"/>
        <dbReference type="ChEBI" id="CHEBI:72587"/>
        <dbReference type="ChEBI" id="CHEBI:180943"/>
    </reaction>
</comment>
<comment type="catalytic activity">
    <reaction evidence="1">
        <text>serotonin + O2 + H2O = (5-hydroxyindol-3-yl)acetaldehyde + H2O2 + NH4(+)</text>
        <dbReference type="Rhea" id="RHEA:69072"/>
        <dbReference type="ChEBI" id="CHEBI:15377"/>
        <dbReference type="ChEBI" id="CHEBI:15379"/>
        <dbReference type="ChEBI" id="CHEBI:16240"/>
        <dbReference type="ChEBI" id="CHEBI:28938"/>
        <dbReference type="ChEBI" id="CHEBI:50157"/>
        <dbReference type="ChEBI" id="CHEBI:350546"/>
    </reaction>
</comment>
<comment type="catalytic activity">
    <reaction evidence="1">
        <text>kynuramine + O2 + H2O = 3-(2-aminophenyl)-3-oxopropanal + H2O2 + NH4(+)</text>
        <dbReference type="Rhea" id="RHEA:59596"/>
        <dbReference type="ChEBI" id="CHEBI:15377"/>
        <dbReference type="ChEBI" id="CHEBI:15379"/>
        <dbReference type="ChEBI" id="CHEBI:16240"/>
        <dbReference type="ChEBI" id="CHEBI:28938"/>
        <dbReference type="ChEBI" id="CHEBI:180898"/>
        <dbReference type="ChEBI" id="CHEBI:180899"/>
    </reaction>
    <physiologicalReaction direction="left-to-right" evidence="1">
        <dbReference type="Rhea" id="RHEA:59597"/>
    </physiologicalReaction>
</comment>
<comment type="catalytic activity">
    <reaction evidence="1">
        <text>tryptamine + O2 + H2O = indole-3-acetaldehyde + H2O2 + NH4(+)</text>
        <dbReference type="Rhea" id="RHEA:59416"/>
        <dbReference type="ChEBI" id="CHEBI:15377"/>
        <dbReference type="ChEBI" id="CHEBI:15379"/>
        <dbReference type="ChEBI" id="CHEBI:16240"/>
        <dbReference type="ChEBI" id="CHEBI:18086"/>
        <dbReference type="ChEBI" id="CHEBI:28938"/>
        <dbReference type="ChEBI" id="CHEBI:57887"/>
    </reaction>
</comment>
<comment type="catalytic activity">
    <reaction evidence="1">
        <text>2-phenylethylamine + O2 + H2O = 2-phenylacetaldehyde + H2O2 + NH4(+)</text>
        <dbReference type="Rhea" id="RHEA:25265"/>
        <dbReference type="ChEBI" id="CHEBI:15377"/>
        <dbReference type="ChEBI" id="CHEBI:15379"/>
        <dbReference type="ChEBI" id="CHEBI:16240"/>
        <dbReference type="ChEBI" id="CHEBI:16424"/>
        <dbReference type="ChEBI" id="CHEBI:28938"/>
        <dbReference type="ChEBI" id="CHEBI:225237"/>
    </reaction>
</comment>
<comment type="cofactor">
    <cofactor evidence="2">
        <name>FAD</name>
        <dbReference type="ChEBI" id="CHEBI:57692"/>
    </cofactor>
</comment>
<comment type="subunit">
    <text evidence="2">Monomer, homo- or heterodimer (containing two subunits of similar size). Each subunit contains a covalently bound flavin. Enzymatically active as monomer (By similarity).</text>
</comment>
<comment type="subcellular location">
    <subcellularLocation>
        <location evidence="1">Mitochondrion outer membrane</location>
        <topology evidence="1">Single-pass type IV membrane protein</topology>
        <orientation evidence="1">Cytoplasmic side</orientation>
    </subcellularLocation>
</comment>
<comment type="similarity">
    <text evidence="3">Belongs to the flavin monoamine oxidase family.</text>
</comment>
<organism>
    <name type="scientific">Ovis aries</name>
    <name type="common">Sheep</name>
    <dbReference type="NCBI Taxonomy" id="9940"/>
    <lineage>
        <taxon>Eukaryota</taxon>
        <taxon>Metazoa</taxon>
        <taxon>Chordata</taxon>
        <taxon>Craniata</taxon>
        <taxon>Vertebrata</taxon>
        <taxon>Euteleostomi</taxon>
        <taxon>Mammalia</taxon>
        <taxon>Eutheria</taxon>
        <taxon>Laurasiatheria</taxon>
        <taxon>Artiodactyla</taxon>
        <taxon>Ruminantia</taxon>
        <taxon>Pecora</taxon>
        <taxon>Bovidae</taxon>
        <taxon>Caprinae</taxon>
        <taxon>Ovis</taxon>
    </lineage>
</organism>
<sequence>YVISAIPPTLTSKIHFRPELPSERNQLIQRLPMGAIIKCMMYYKEA</sequence>
<feature type="chain" id="PRO_0000099855" description="Amine oxidase [flavin-containing] A">
    <location>
        <begin position="1" status="less than"/>
        <end position="46" status="greater than"/>
    </location>
</feature>
<feature type="non-terminal residue">
    <location>
        <position position="1"/>
    </location>
</feature>
<feature type="non-terminal residue">
    <location>
        <position position="46"/>
    </location>
</feature>
<accession>O18851</accession>
<dbReference type="EC" id="1.4.3.21" evidence="1"/>
<dbReference type="EC" id="1.4.3.4" evidence="1"/>
<dbReference type="EMBL" id="AF023613">
    <property type="protein sequence ID" value="AAC16911.1"/>
    <property type="molecule type" value="Genomic_DNA"/>
</dbReference>
<dbReference type="SMR" id="O18851"/>
<dbReference type="STRING" id="9940.ENSOARP00000003258"/>
<dbReference type="PaxDb" id="9940-ENSOARP00000003258"/>
<dbReference type="eggNOG" id="KOG0029">
    <property type="taxonomic scope" value="Eukaryota"/>
</dbReference>
<dbReference type="Proteomes" id="UP000002356">
    <property type="component" value="Unplaced"/>
</dbReference>
<dbReference type="GO" id="GO:0005741">
    <property type="term" value="C:mitochondrial outer membrane"/>
    <property type="evidence" value="ECO:0007669"/>
    <property type="project" value="UniProtKB-SubCell"/>
</dbReference>
<dbReference type="GO" id="GO:0050660">
    <property type="term" value="F:flavin adenine dinucleotide binding"/>
    <property type="evidence" value="ECO:0007669"/>
    <property type="project" value="TreeGrafter"/>
</dbReference>
<dbReference type="GO" id="GO:0097621">
    <property type="term" value="F:monoamine oxidase activity"/>
    <property type="evidence" value="ECO:0000250"/>
    <property type="project" value="UniProtKB"/>
</dbReference>
<dbReference type="GO" id="GO:0008131">
    <property type="term" value="F:primary methylamine oxidase activity"/>
    <property type="evidence" value="ECO:0000250"/>
    <property type="project" value="UniProtKB"/>
</dbReference>
<dbReference type="GO" id="GO:0006584">
    <property type="term" value="P:catecholamine metabolic process"/>
    <property type="evidence" value="ECO:0007669"/>
    <property type="project" value="UniProtKB-KW"/>
</dbReference>
<dbReference type="Gene3D" id="3.50.50.60">
    <property type="entry name" value="FAD/NAD(P)-binding domain"/>
    <property type="match status" value="1"/>
</dbReference>
<dbReference type="InterPro" id="IPR002937">
    <property type="entry name" value="Amino_oxidase"/>
</dbReference>
<dbReference type="InterPro" id="IPR036188">
    <property type="entry name" value="FAD/NAD-bd_sf"/>
</dbReference>
<dbReference type="InterPro" id="IPR050703">
    <property type="entry name" value="Flavin_MAO"/>
</dbReference>
<dbReference type="PANTHER" id="PTHR43563">
    <property type="entry name" value="AMINE OXIDASE"/>
    <property type="match status" value="1"/>
</dbReference>
<dbReference type="PANTHER" id="PTHR43563:SF11">
    <property type="entry name" value="AMINE OXIDASE [FLAVIN-CONTAINING] A"/>
    <property type="match status" value="1"/>
</dbReference>
<dbReference type="Pfam" id="PF01593">
    <property type="entry name" value="Amino_oxidase"/>
    <property type="match status" value="1"/>
</dbReference>
<dbReference type="SUPFAM" id="SSF51905">
    <property type="entry name" value="FAD/NAD(P)-binding domain"/>
    <property type="match status" value="1"/>
</dbReference>
<reference key="1">
    <citation type="journal article" date="1997" name="Anim. Genet.">
        <title>A ScaI polymorphism at the ovine monoamine oxidase A locus (MAOA).</title>
        <authorList>
            <person name="Cambridge L.M."/>
            <person name="Lumsden J.M."/>
            <person name="Sadhigi M."/>
            <person name="Galloway S.M."/>
        </authorList>
    </citation>
    <scope>NUCLEOTIDE SEQUENCE [GENOMIC DNA]</scope>
</reference>
<name>AOFA_SHEEP</name>
<proteinExistence type="inferred from homology"/>
<gene>
    <name evidence="2" type="primary">MAOA</name>
</gene>
<keyword id="KW-0128">Catecholamine metabolism</keyword>
<keyword id="KW-0274">FAD</keyword>
<keyword id="KW-0285">Flavoprotein</keyword>
<keyword id="KW-0472">Membrane</keyword>
<keyword id="KW-0496">Mitochondrion</keyword>
<keyword id="KW-1000">Mitochondrion outer membrane</keyword>
<keyword id="KW-0531">Neurotransmitter degradation</keyword>
<keyword id="KW-0560">Oxidoreductase</keyword>
<keyword id="KW-1185">Reference proteome</keyword>
<keyword id="KW-0812">Transmembrane</keyword>